<gene>
    <name evidence="1" type="primary">ilvD</name>
    <name type="ordered locus">Lxx13210</name>
</gene>
<evidence type="ECO:0000255" key="1">
    <source>
        <dbReference type="HAMAP-Rule" id="MF_00012"/>
    </source>
</evidence>
<keyword id="KW-0001">2Fe-2S</keyword>
<keyword id="KW-0028">Amino-acid biosynthesis</keyword>
<keyword id="KW-0100">Branched-chain amino acid biosynthesis</keyword>
<keyword id="KW-0408">Iron</keyword>
<keyword id="KW-0411">Iron-sulfur</keyword>
<keyword id="KW-0456">Lyase</keyword>
<keyword id="KW-0460">Magnesium</keyword>
<keyword id="KW-0479">Metal-binding</keyword>
<keyword id="KW-1185">Reference proteome</keyword>
<accession>Q6AEN9</accession>
<protein>
    <recommendedName>
        <fullName evidence="1">Dihydroxy-acid dehydratase</fullName>
        <shortName evidence="1">DAD</shortName>
        <ecNumber evidence="1">4.2.1.9</ecNumber>
    </recommendedName>
</protein>
<name>ILVD_LEIXX</name>
<sequence length="564" mass="58941">MPQIDWKPRSRVVTDGIEATTSRGMLRAVGMGDADWEKPQIGIASSWNEITPCNLSLDRLAQGAKEGVHSGGGYPLQFGTVSVSDGISMGHEGMHFSLVSREVIADSVETVMMAERLDGTVLLAGCDKSLPGMLMAAARLDLSAIFLYAGSIAPGWVKLSDGTEKDVTIIDSFEAVGACKAGKMSEEDLKRIECAIAPGEGACGGMYTANTMASVAEALGMSLPGSAAPPSADRRRDSFAHRSGEAVVSLLKQGITARDILTKKAFENAIAVAMAFGGSTNVVLHLLAIAREAEVDLTIDDFNRIGETVPHIGDLKPFGTYVMNDVDRHGGVPVVMKALLDAGLLHGDCLTVTGKTVAENLAEIDPPAPDGTVLRSLDNPIHPTGGLTILKGTLAPEGAVVKTAGFDAEVFEGPARVFERERAAMDALTAGRINAGDVVVICYEGPKGGPGMREMLAITATIKGAGLGKDVLLLTDGRFSGGTTGLCIGHIAPEAVDAGPIAFVRDGDLIRVDIAARSLDLLVDESELTARRDGWAPLPPRYTRGVLAKYSKLVRSAAEGAVTG</sequence>
<dbReference type="EC" id="4.2.1.9" evidence="1"/>
<dbReference type="EMBL" id="AE016822">
    <property type="protein sequence ID" value="AAT89157.1"/>
    <property type="molecule type" value="Genomic_DNA"/>
</dbReference>
<dbReference type="RefSeq" id="WP_011186151.1">
    <property type="nucleotide sequence ID" value="NC_006087.1"/>
</dbReference>
<dbReference type="SMR" id="Q6AEN9"/>
<dbReference type="STRING" id="281090.Lxx13210"/>
<dbReference type="KEGG" id="lxx:Lxx13210"/>
<dbReference type="eggNOG" id="COG0129">
    <property type="taxonomic scope" value="Bacteria"/>
</dbReference>
<dbReference type="HOGENOM" id="CLU_014271_4_2_11"/>
<dbReference type="UniPathway" id="UPA00047">
    <property type="reaction ID" value="UER00057"/>
</dbReference>
<dbReference type="UniPathway" id="UPA00049">
    <property type="reaction ID" value="UER00061"/>
</dbReference>
<dbReference type="Proteomes" id="UP000001306">
    <property type="component" value="Chromosome"/>
</dbReference>
<dbReference type="GO" id="GO:0051537">
    <property type="term" value="F:2 iron, 2 sulfur cluster binding"/>
    <property type="evidence" value="ECO:0007669"/>
    <property type="project" value="UniProtKB-UniRule"/>
</dbReference>
<dbReference type="GO" id="GO:0004160">
    <property type="term" value="F:dihydroxy-acid dehydratase activity"/>
    <property type="evidence" value="ECO:0007669"/>
    <property type="project" value="UniProtKB-UniRule"/>
</dbReference>
<dbReference type="GO" id="GO:0000287">
    <property type="term" value="F:magnesium ion binding"/>
    <property type="evidence" value="ECO:0007669"/>
    <property type="project" value="UniProtKB-UniRule"/>
</dbReference>
<dbReference type="GO" id="GO:0009097">
    <property type="term" value="P:isoleucine biosynthetic process"/>
    <property type="evidence" value="ECO:0007669"/>
    <property type="project" value="UniProtKB-UniRule"/>
</dbReference>
<dbReference type="GO" id="GO:0009099">
    <property type="term" value="P:L-valine biosynthetic process"/>
    <property type="evidence" value="ECO:0007669"/>
    <property type="project" value="UniProtKB-UniRule"/>
</dbReference>
<dbReference type="FunFam" id="3.50.30.80:FF:000001">
    <property type="entry name" value="Dihydroxy-acid dehydratase"/>
    <property type="match status" value="1"/>
</dbReference>
<dbReference type="Gene3D" id="3.50.30.80">
    <property type="entry name" value="IlvD/EDD C-terminal domain-like"/>
    <property type="match status" value="1"/>
</dbReference>
<dbReference type="HAMAP" id="MF_00012">
    <property type="entry name" value="IlvD"/>
    <property type="match status" value="1"/>
</dbReference>
<dbReference type="InterPro" id="IPR050165">
    <property type="entry name" value="DHAD_IlvD/Edd"/>
</dbReference>
<dbReference type="InterPro" id="IPR042096">
    <property type="entry name" value="Dihydro-acid_dehy_C"/>
</dbReference>
<dbReference type="InterPro" id="IPR004404">
    <property type="entry name" value="DihydroxyA_deHydtase"/>
</dbReference>
<dbReference type="InterPro" id="IPR020558">
    <property type="entry name" value="DiOHA_6PGluconate_deHydtase_CS"/>
</dbReference>
<dbReference type="InterPro" id="IPR056740">
    <property type="entry name" value="ILV_EDD_C"/>
</dbReference>
<dbReference type="InterPro" id="IPR000581">
    <property type="entry name" value="ILV_EDD_N"/>
</dbReference>
<dbReference type="InterPro" id="IPR037237">
    <property type="entry name" value="IlvD/EDD_N"/>
</dbReference>
<dbReference type="NCBIfam" id="TIGR00110">
    <property type="entry name" value="ilvD"/>
    <property type="match status" value="1"/>
</dbReference>
<dbReference type="NCBIfam" id="NF002068">
    <property type="entry name" value="PRK00911.1"/>
    <property type="match status" value="1"/>
</dbReference>
<dbReference type="PANTHER" id="PTHR21000">
    <property type="entry name" value="DIHYDROXY-ACID DEHYDRATASE DAD"/>
    <property type="match status" value="1"/>
</dbReference>
<dbReference type="PANTHER" id="PTHR21000:SF5">
    <property type="entry name" value="DIHYDROXY-ACID DEHYDRATASE, MITOCHONDRIAL"/>
    <property type="match status" value="1"/>
</dbReference>
<dbReference type="Pfam" id="PF24877">
    <property type="entry name" value="ILV_EDD_C"/>
    <property type="match status" value="1"/>
</dbReference>
<dbReference type="Pfam" id="PF00920">
    <property type="entry name" value="ILVD_EDD_N"/>
    <property type="match status" value="1"/>
</dbReference>
<dbReference type="SUPFAM" id="SSF143975">
    <property type="entry name" value="IlvD/EDD N-terminal domain-like"/>
    <property type="match status" value="1"/>
</dbReference>
<dbReference type="SUPFAM" id="SSF52016">
    <property type="entry name" value="LeuD/IlvD-like"/>
    <property type="match status" value="1"/>
</dbReference>
<dbReference type="PROSITE" id="PS00886">
    <property type="entry name" value="ILVD_EDD_1"/>
    <property type="match status" value="1"/>
</dbReference>
<dbReference type="PROSITE" id="PS00887">
    <property type="entry name" value="ILVD_EDD_2"/>
    <property type="match status" value="1"/>
</dbReference>
<feature type="chain" id="PRO_0000103473" description="Dihydroxy-acid dehydratase">
    <location>
        <begin position="1"/>
        <end position="564"/>
    </location>
</feature>
<feature type="active site" description="Proton acceptor" evidence="1">
    <location>
        <position position="480"/>
    </location>
</feature>
<feature type="binding site" evidence="1">
    <location>
        <position position="53"/>
    </location>
    <ligand>
        <name>[2Fe-2S] cluster</name>
        <dbReference type="ChEBI" id="CHEBI:190135"/>
    </ligand>
</feature>
<feature type="binding site" evidence="1">
    <location>
        <position position="85"/>
    </location>
    <ligand>
        <name>Mg(2+)</name>
        <dbReference type="ChEBI" id="CHEBI:18420"/>
    </ligand>
</feature>
<feature type="binding site" evidence="1">
    <location>
        <position position="126"/>
    </location>
    <ligand>
        <name>[2Fe-2S] cluster</name>
        <dbReference type="ChEBI" id="CHEBI:190135"/>
    </ligand>
</feature>
<feature type="binding site" evidence="1">
    <location>
        <position position="127"/>
    </location>
    <ligand>
        <name>Mg(2+)</name>
        <dbReference type="ChEBI" id="CHEBI:18420"/>
    </ligand>
</feature>
<feature type="binding site" description="via carbamate group" evidence="1">
    <location>
        <position position="128"/>
    </location>
    <ligand>
        <name>Mg(2+)</name>
        <dbReference type="ChEBI" id="CHEBI:18420"/>
    </ligand>
</feature>
<feature type="binding site" evidence="1">
    <location>
        <position position="203"/>
    </location>
    <ligand>
        <name>[2Fe-2S] cluster</name>
        <dbReference type="ChEBI" id="CHEBI:190135"/>
    </ligand>
</feature>
<feature type="binding site" evidence="1">
    <location>
        <position position="454"/>
    </location>
    <ligand>
        <name>Mg(2+)</name>
        <dbReference type="ChEBI" id="CHEBI:18420"/>
    </ligand>
</feature>
<feature type="modified residue" description="N6-carboxylysine" evidence="1">
    <location>
        <position position="128"/>
    </location>
</feature>
<proteinExistence type="inferred from homology"/>
<reference key="1">
    <citation type="journal article" date="2004" name="Mol. Plant Microbe Interact.">
        <title>The genome sequence of the Gram-positive sugarcane pathogen Leifsonia xyli subsp. xyli.</title>
        <authorList>
            <person name="Monteiro-Vitorello C.B."/>
            <person name="Camargo L.E.A."/>
            <person name="Van Sluys M.A."/>
            <person name="Kitajima J.P."/>
            <person name="Truffi D."/>
            <person name="do Amaral A.M."/>
            <person name="Harakava R."/>
            <person name="de Oliveira J.C.F."/>
            <person name="Wood D."/>
            <person name="de Oliveira M.C."/>
            <person name="Miyaki C.Y."/>
            <person name="Takita M.A."/>
            <person name="da Silva A.C.R."/>
            <person name="Furlan L.R."/>
            <person name="Carraro D.M."/>
            <person name="Camarotte G."/>
            <person name="Almeida N.F. Jr."/>
            <person name="Carrer H."/>
            <person name="Coutinho L.L."/>
            <person name="El-Dorry H.A."/>
            <person name="Ferro M.I.T."/>
            <person name="Gagliardi P.R."/>
            <person name="Giglioti E."/>
            <person name="Goldman M.H.S."/>
            <person name="Goldman G.H."/>
            <person name="Kimura E.T."/>
            <person name="Ferro E.S."/>
            <person name="Kuramae E.E."/>
            <person name="Lemos E.G.M."/>
            <person name="Lemos M.V.F."/>
            <person name="Mauro S.M.Z."/>
            <person name="Machado M.A."/>
            <person name="Marino C.L."/>
            <person name="Menck C.F."/>
            <person name="Nunes L.R."/>
            <person name="Oliveira R.C."/>
            <person name="Pereira G.G."/>
            <person name="Siqueira W."/>
            <person name="de Souza A.A."/>
            <person name="Tsai S.M."/>
            <person name="Zanca A.S."/>
            <person name="Simpson A.J.G."/>
            <person name="Brumbley S.M."/>
            <person name="Setubal J.C."/>
        </authorList>
    </citation>
    <scope>NUCLEOTIDE SEQUENCE [LARGE SCALE GENOMIC DNA]</scope>
    <source>
        <strain>CTCB07</strain>
    </source>
</reference>
<organism>
    <name type="scientific">Leifsonia xyli subsp. xyli (strain CTCB07)</name>
    <dbReference type="NCBI Taxonomy" id="281090"/>
    <lineage>
        <taxon>Bacteria</taxon>
        <taxon>Bacillati</taxon>
        <taxon>Actinomycetota</taxon>
        <taxon>Actinomycetes</taxon>
        <taxon>Micrococcales</taxon>
        <taxon>Microbacteriaceae</taxon>
        <taxon>Leifsonia</taxon>
    </lineage>
</organism>
<comment type="function">
    <text evidence="1">Functions in the biosynthesis of branched-chain amino acids. Catalyzes the dehydration of (2R,3R)-2,3-dihydroxy-3-methylpentanoate (2,3-dihydroxy-3-methylvalerate) into 2-oxo-3-methylpentanoate (2-oxo-3-methylvalerate) and of (2R)-2,3-dihydroxy-3-methylbutanoate (2,3-dihydroxyisovalerate) into 2-oxo-3-methylbutanoate (2-oxoisovalerate), the penultimate precursor to L-isoleucine and L-valine, respectively.</text>
</comment>
<comment type="catalytic activity">
    <reaction evidence="1">
        <text>(2R)-2,3-dihydroxy-3-methylbutanoate = 3-methyl-2-oxobutanoate + H2O</text>
        <dbReference type="Rhea" id="RHEA:24809"/>
        <dbReference type="ChEBI" id="CHEBI:11851"/>
        <dbReference type="ChEBI" id="CHEBI:15377"/>
        <dbReference type="ChEBI" id="CHEBI:49072"/>
        <dbReference type="EC" id="4.2.1.9"/>
    </reaction>
    <physiologicalReaction direction="left-to-right" evidence="1">
        <dbReference type="Rhea" id="RHEA:24810"/>
    </physiologicalReaction>
</comment>
<comment type="catalytic activity">
    <reaction evidence="1">
        <text>(2R,3R)-2,3-dihydroxy-3-methylpentanoate = (S)-3-methyl-2-oxopentanoate + H2O</text>
        <dbReference type="Rhea" id="RHEA:27694"/>
        <dbReference type="ChEBI" id="CHEBI:15377"/>
        <dbReference type="ChEBI" id="CHEBI:35146"/>
        <dbReference type="ChEBI" id="CHEBI:49258"/>
        <dbReference type="EC" id="4.2.1.9"/>
    </reaction>
    <physiologicalReaction direction="left-to-right" evidence="1">
        <dbReference type="Rhea" id="RHEA:27695"/>
    </physiologicalReaction>
</comment>
<comment type="cofactor">
    <cofactor evidence="1">
        <name>[2Fe-2S] cluster</name>
        <dbReference type="ChEBI" id="CHEBI:190135"/>
    </cofactor>
    <text evidence="1">Binds 1 [2Fe-2S] cluster per subunit. This cluster acts as a Lewis acid cofactor.</text>
</comment>
<comment type="cofactor">
    <cofactor evidence="1">
        <name>Mg(2+)</name>
        <dbReference type="ChEBI" id="CHEBI:18420"/>
    </cofactor>
</comment>
<comment type="pathway">
    <text evidence="1">Amino-acid biosynthesis; L-isoleucine biosynthesis; L-isoleucine from 2-oxobutanoate: step 3/4.</text>
</comment>
<comment type="pathway">
    <text evidence="1">Amino-acid biosynthesis; L-valine biosynthesis; L-valine from pyruvate: step 3/4.</text>
</comment>
<comment type="subunit">
    <text evidence="1">Homodimer.</text>
</comment>
<comment type="similarity">
    <text evidence="1">Belongs to the IlvD/Edd family.</text>
</comment>